<accession>Q3SKG8</accession>
<gene>
    <name evidence="1" type="primary">metG</name>
    <name type="ordered locus">Tbd_0860</name>
</gene>
<name>SYM_THIDA</name>
<keyword id="KW-0030">Aminoacyl-tRNA synthetase</keyword>
<keyword id="KW-0067">ATP-binding</keyword>
<keyword id="KW-0963">Cytoplasm</keyword>
<keyword id="KW-0436">Ligase</keyword>
<keyword id="KW-0479">Metal-binding</keyword>
<keyword id="KW-0547">Nucleotide-binding</keyword>
<keyword id="KW-0648">Protein biosynthesis</keyword>
<keyword id="KW-1185">Reference proteome</keyword>
<keyword id="KW-0694">RNA-binding</keyword>
<keyword id="KW-0820">tRNA-binding</keyword>
<keyword id="KW-0862">Zinc</keyword>
<dbReference type="EC" id="6.1.1.10" evidence="1"/>
<dbReference type="EMBL" id="CP000116">
    <property type="protein sequence ID" value="AAZ96813.1"/>
    <property type="molecule type" value="Genomic_DNA"/>
</dbReference>
<dbReference type="RefSeq" id="WP_011311372.1">
    <property type="nucleotide sequence ID" value="NC_007404.1"/>
</dbReference>
<dbReference type="SMR" id="Q3SKG8"/>
<dbReference type="STRING" id="292415.Tbd_0860"/>
<dbReference type="KEGG" id="tbd:Tbd_0860"/>
<dbReference type="eggNOG" id="COG0073">
    <property type="taxonomic scope" value="Bacteria"/>
</dbReference>
<dbReference type="eggNOG" id="COG0143">
    <property type="taxonomic scope" value="Bacteria"/>
</dbReference>
<dbReference type="HOGENOM" id="CLU_009710_7_0_4"/>
<dbReference type="Proteomes" id="UP000008291">
    <property type="component" value="Chromosome"/>
</dbReference>
<dbReference type="GO" id="GO:0005829">
    <property type="term" value="C:cytosol"/>
    <property type="evidence" value="ECO:0007669"/>
    <property type="project" value="TreeGrafter"/>
</dbReference>
<dbReference type="GO" id="GO:0005524">
    <property type="term" value="F:ATP binding"/>
    <property type="evidence" value="ECO:0007669"/>
    <property type="project" value="UniProtKB-UniRule"/>
</dbReference>
<dbReference type="GO" id="GO:0046872">
    <property type="term" value="F:metal ion binding"/>
    <property type="evidence" value="ECO:0007669"/>
    <property type="project" value="UniProtKB-KW"/>
</dbReference>
<dbReference type="GO" id="GO:0004825">
    <property type="term" value="F:methionine-tRNA ligase activity"/>
    <property type="evidence" value="ECO:0007669"/>
    <property type="project" value="UniProtKB-UniRule"/>
</dbReference>
<dbReference type="GO" id="GO:0000049">
    <property type="term" value="F:tRNA binding"/>
    <property type="evidence" value="ECO:0007669"/>
    <property type="project" value="UniProtKB-KW"/>
</dbReference>
<dbReference type="GO" id="GO:0006431">
    <property type="term" value="P:methionyl-tRNA aminoacylation"/>
    <property type="evidence" value="ECO:0007669"/>
    <property type="project" value="UniProtKB-UniRule"/>
</dbReference>
<dbReference type="CDD" id="cd07957">
    <property type="entry name" value="Anticodon_Ia_Met"/>
    <property type="match status" value="1"/>
</dbReference>
<dbReference type="CDD" id="cd00814">
    <property type="entry name" value="MetRS_core"/>
    <property type="match status" value="1"/>
</dbReference>
<dbReference type="CDD" id="cd02800">
    <property type="entry name" value="tRNA_bind_EcMetRS_like"/>
    <property type="match status" value="1"/>
</dbReference>
<dbReference type="FunFam" id="1.10.730.10:FF:000005">
    <property type="entry name" value="Methionine--tRNA ligase"/>
    <property type="match status" value="1"/>
</dbReference>
<dbReference type="FunFam" id="2.20.28.20:FF:000001">
    <property type="entry name" value="Methionine--tRNA ligase"/>
    <property type="match status" value="1"/>
</dbReference>
<dbReference type="FunFam" id="2.40.50.140:FF:000042">
    <property type="entry name" value="Methionine--tRNA ligase"/>
    <property type="match status" value="1"/>
</dbReference>
<dbReference type="Gene3D" id="3.40.50.620">
    <property type="entry name" value="HUPs"/>
    <property type="match status" value="1"/>
</dbReference>
<dbReference type="Gene3D" id="1.10.730.10">
    <property type="entry name" value="Isoleucyl-tRNA Synthetase, Domain 1"/>
    <property type="match status" value="1"/>
</dbReference>
<dbReference type="Gene3D" id="2.20.28.20">
    <property type="entry name" value="Methionyl-tRNA synthetase, Zn-domain"/>
    <property type="match status" value="1"/>
</dbReference>
<dbReference type="Gene3D" id="2.40.50.140">
    <property type="entry name" value="Nucleic acid-binding proteins"/>
    <property type="match status" value="1"/>
</dbReference>
<dbReference type="HAMAP" id="MF_00098">
    <property type="entry name" value="Met_tRNA_synth_type1"/>
    <property type="match status" value="1"/>
</dbReference>
<dbReference type="InterPro" id="IPR001412">
    <property type="entry name" value="aa-tRNA-synth_I_CS"/>
</dbReference>
<dbReference type="InterPro" id="IPR041872">
    <property type="entry name" value="Anticodon_Met"/>
</dbReference>
<dbReference type="InterPro" id="IPR004495">
    <property type="entry name" value="Met-tRNA-synth_bsu_C"/>
</dbReference>
<dbReference type="InterPro" id="IPR023458">
    <property type="entry name" value="Met-tRNA_ligase_1"/>
</dbReference>
<dbReference type="InterPro" id="IPR014758">
    <property type="entry name" value="Met-tRNA_synth"/>
</dbReference>
<dbReference type="InterPro" id="IPR015413">
    <property type="entry name" value="Methionyl/Leucyl_tRNA_Synth"/>
</dbReference>
<dbReference type="InterPro" id="IPR033911">
    <property type="entry name" value="MetRS_core"/>
</dbReference>
<dbReference type="InterPro" id="IPR029038">
    <property type="entry name" value="MetRS_Zn"/>
</dbReference>
<dbReference type="InterPro" id="IPR012340">
    <property type="entry name" value="NA-bd_OB-fold"/>
</dbReference>
<dbReference type="InterPro" id="IPR014729">
    <property type="entry name" value="Rossmann-like_a/b/a_fold"/>
</dbReference>
<dbReference type="InterPro" id="IPR002547">
    <property type="entry name" value="tRNA-bd_dom"/>
</dbReference>
<dbReference type="InterPro" id="IPR009080">
    <property type="entry name" value="tRNAsynth_Ia_anticodon-bd"/>
</dbReference>
<dbReference type="NCBIfam" id="TIGR00398">
    <property type="entry name" value="metG"/>
    <property type="match status" value="1"/>
</dbReference>
<dbReference type="NCBIfam" id="TIGR00399">
    <property type="entry name" value="metG_C_term"/>
    <property type="match status" value="1"/>
</dbReference>
<dbReference type="NCBIfam" id="NF001100">
    <property type="entry name" value="PRK00133.1"/>
    <property type="match status" value="1"/>
</dbReference>
<dbReference type="PANTHER" id="PTHR45765">
    <property type="entry name" value="METHIONINE--TRNA LIGASE"/>
    <property type="match status" value="1"/>
</dbReference>
<dbReference type="PANTHER" id="PTHR45765:SF1">
    <property type="entry name" value="METHIONINE--TRNA LIGASE, CYTOPLASMIC"/>
    <property type="match status" value="1"/>
</dbReference>
<dbReference type="Pfam" id="PF19303">
    <property type="entry name" value="Anticodon_3"/>
    <property type="match status" value="1"/>
</dbReference>
<dbReference type="Pfam" id="PF09334">
    <property type="entry name" value="tRNA-synt_1g"/>
    <property type="match status" value="1"/>
</dbReference>
<dbReference type="Pfam" id="PF01588">
    <property type="entry name" value="tRNA_bind"/>
    <property type="match status" value="1"/>
</dbReference>
<dbReference type="PRINTS" id="PR01041">
    <property type="entry name" value="TRNASYNTHMET"/>
</dbReference>
<dbReference type="SUPFAM" id="SSF47323">
    <property type="entry name" value="Anticodon-binding domain of a subclass of class I aminoacyl-tRNA synthetases"/>
    <property type="match status" value="1"/>
</dbReference>
<dbReference type="SUPFAM" id="SSF57770">
    <property type="entry name" value="Methionyl-tRNA synthetase (MetRS), Zn-domain"/>
    <property type="match status" value="1"/>
</dbReference>
<dbReference type="SUPFAM" id="SSF50249">
    <property type="entry name" value="Nucleic acid-binding proteins"/>
    <property type="match status" value="1"/>
</dbReference>
<dbReference type="SUPFAM" id="SSF52374">
    <property type="entry name" value="Nucleotidylyl transferase"/>
    <property type="match status" value="1"/>
</dbReference>
<dbReference type="PROSITE" id="PS00178">
    <property type="entry name" value="AA_TRNA_LIGASE_I"/>
    <property type="match status" value="1"/>
</dbReference>
<dbReference type="PROSITE" id="PS50886">
    <property type="entry name" value="TRBD"/>
    <property type="match status" value="1"/>
</dbReference>
<feature type="chain" id="PRO_0000331921" description="Methionine--tRNA ligase">
    <location>
        <begin position="1"/>
        <end position="690"/>
    </location>
</feature>
<feature type="domain" description="tRNA-binding" evidence="1">
    <location>
        <begin position="582"/>
        <end position="690"/>
    </location>
</feature>
<feature type="short sequence motif" description="'HIGH' region">
    <location>
        <begin position="12"/>
        <end position="22"/>
    </location>
</feature>
<feature type="short sequence motif" description="'KMSKS' region">
    <location>
        <begin position="328"/>
        <end position="332"/>
    </location>
</feature>
<feature type="binding site" evidence="1">
    <location>
        <position position="143"/>
    </location>
    <ligand>
        <name>Zn(2+)</name>
        <dbReference type="ChEBI" id="CHEBI:29105"/>
    </ligand>
</feature>
<feature type="binding site" evidence="1">
    <location>
        <position position="146"/>
    </location>
    <ligand>
        <name>Zn(2+)</name>
        <dbReference type="ChEBI" id="CHEBI:29105"/>
    </ligand>
</feature>
<feature type="binding site" evidence="1">
    <location>
        <position position="156"/>
    </location>
    <ligand>
        <name>Zn(2+)</name>
        <dbReference type="ChEBI" id="CHEBI:29105"/>
    </ligand>
</feature>
<feature type="binding site" evidence="1">
    <location>
        <position position="159"/>
    </location>
    <ligand>
        <name>Zn(2+)</name>
        <dbReference type="ChEBI" id="CHEBI:29105"/>
    </ligand>
</feature>
<feature type="binding site" evidence="1">
    <location>
        <position position="331"/>
    </location>
    <ligand>
        <name>ATP</name>
        <dbReference type="ChEBI" id="CHEBI:30616"/>
    </ligand>
</feature>
<sequence>MSRQILVTSALPYANGSIHLGHLVEYIQTDIWVRFQKMRGTNCRYMCADDTHGTAIMLRAEKEAITPEALIQRVWAEHTRDFAGFHIGFDHYYSTHSDENREHASKIYLALKDAGLIEVKTIAQLYDPVKNLFLPDRFIKGECPKCGAADQYGDNCEVCGATYSPTELKNPVSAVSGATPVHKDSEHYFFKLGDCEAFLREWTTSGTLQAEAANKMQEWFAAGLNNWDISRDAPYFGFEIPDAPGKYFYVWLDAPVGYMASFARYAKDHGLDFDAWWGKDSKTELVHFIGKDILYFHALFWPAMLKFSGHRLPTAVYAHGFLTVNGQKMSKSRGTFITASSYLDQGLNPEWLRYYYAAKLNGTMEDIDLNLDDFVARVNSDLVGKFINIASRTAGFIHKKFDGKLADGVGNIELIGEFQAAADTIAAHYEARDYAKALREIMALADRANQYVADEKPWELAKDDAAVYRLHEVCTVALNLFRLLTLYLKPVLPKLAGEVERFLDIPALTWKDARSLFIRQAINAYSHLMTRIDPKSIEAMVDANKQNLEPTPAPAPARHAEAQAHAAQAVEAPKTETISIDDFAKVDLRIARIANAEHVEGADKLLRLTLDVGELGPRQVFAGIKSAYAPEALVGRLTVMVANLAPRKMKFGMSEGMVLAASNPDGHKDDVPGLFILSPDSGAEPGMKVK</sequence>
<reference key="1">
    <citation type="journal article" date="2006" name="J. Bacteriol.">
        <title>The genome sequence of the obligately chemolithoautotrophic, facultatively anaerobic bacterium Thiobacillus denitrificans.</title>
        <authorList>
            <person name="Beller H.R."/>
            <person name="Chain P.S."/>
            <person name="Letain T.E."/>
            <person name="Chakicherla A."/>
            <person name="Larimer F.W."/>
            <person name="Richardson P.M."/>
            <person name="Coleman M.A."/>
            <person name="Wood A.P."/>
            <person name="Kelly D.P."/>
        </authorList>
    </citation>
    <scope>NUCLEOTIDE SEQUENCE [LARGE SCALE GENOMIC DNA]</scope>
    <source>
        <strain>ATCC 25259 / T1</strain>
    </source>
</reference>
<protein>
    <recommendedName>
        <fullName evidence="1">Methionine--tRNA ligase</fullName>
        <ecNumber evidence="1">6.1.1.10</ecNumber>
    </recommendedName>
    <alternativeName>
        <fullName evidence="1">Methionyl-tRNA synthetase</fullName>
        <shortName evidence="1">MetRS</shortName>
    </alternativeName>
</protein>
<proteinExistence type="inferred from homology"/>
<organism>
    <name type="scientific">Thiobacillus denitrificans (strain ATCC 25259 / T1)</name>
    <dbReference type="NCBI Taxonomy" id="292415"/>
    <lineage>
        <taxon>Bacteria</taxon>
        <taxon>Pseudomonadati</taxon>
        <taxon>Pseudomonadota</taxon>
        <taxon>Betaproteobacteria</taxon>
        <taxon>Nitrosomonadales</taxon>
        <taxon>Thiobacillaceae</taxon>
        <taxon>Thiobacillus</taxon>
    </lineage>
</organism>
<comment type="function">
    <text evidence="1">Is required not only for elongation of protein synthesis but also for the initiation of all mRNA translation through initiator tRNA(fMet) aminoacylation.</text>
</comment>
<comment type="catalytic activity">
    <reaction evidence="1">
        <text>tRNA(Met) + L-methionine + ATP = L-methionyl-tRNA(Met) + AMP + diphosphate</text>
        <dbReference type="Rhea" id="RHEA:13481"/>
        <dbReference type="Rhea" id="RHEA-COMP:9667"/>
        <dbReference type="Rhea" id="RHEA-COMP:9698"/>
        <dbReference type="ChEBI" id="CHEBI:30616"/>
        <dbReference type="ChEBI" id="CHEBI:33019"/>
        <dbReference type="ChEBI" id="CHEBI:57844"/>
        <dbReference type="ChEBI" id="CHEBI:78442"/>
        <dbReference type="ChEBI" id="CHEBI:78530"/>
        <dbReference type="ChEBI" id="CHEBI:456215"/>
        <dbReference type="EC" id="6.1.1.10"/>
    </reaction>
</comment>
<comment type="cofactor">
    <cofactor evidence="1">
        <name>Zn(2+)</name>
        <dbReference type="ChEBI" id="CHEBI:29105"/>
    </cofactor>
    <text evidence="1">Binds 1 zinc ion per subunit.</text>
</comment>
<comment type="subunit">
    <text evidence="1">Homodimer.</text>
</comment>
<comment type="subcellular location">
    <subcellularLocation>
        <location evidence="1">Cytoplasm</location>
    </subcellularLocation>
</comment>
<comment type="similarity">
    <text evidence="1">Belongs to the class-I aminoacyl-tRNA synthetase family. MetG type 1 subfamily.</text>
</comment>
<evidence type="ECO:0000255" key="1">
    <source>
        <dbReference type="HAMAP-Rule" id="MF_00098"/>
    </source>
</evidence>